<gene>
    <name type="primary">L</name>
</gene>
<feature type="chain" id="PRO_0000297840" description="RNA-directed RNA polymerase L">
    <location>
        <begin position="1"/>
        <end position="1983"/>
    </location>
</feature>
<feature type="domain" description="RdRp catalytic" evidence="3">
    <location>
        <begin position="559"/>
        <end position="756"/>
    </location>
</feature>
<feature type="domain" description="Mononegavirus-type SAM-dependent 2'-O-MTase" evidence="4">
    <location>
        <begin position="1588"/>
        <end position="1785"/>
    </location>
</feature>
<protein>
    <recommendedName>
        <fullName>RNA-directed RNA polymerase L</fullName>
        <shortName>Protein L</shortName>
    </recommendedName>
    <alternativeName>
        <fullName>Large structural protein</fullName>
    </alternativeName>
    <alternativeName>
        <fullName>Replicase</fullName>
    </alternativeName>
    <alternativeName>
        <fullName>Transcriptase</fullName>
    </alternativeName>
    <domain>
        <recommendedName>
            <fullName>RNA-directed RNA polymerase</fullName>
            <ecNumber evidence="2">2.7.7.48</ecNumber>
        </recommendedName>
    </domain>
    <domain>
        <recommendedName>
            <fullName evidence="1">GTP phosphohydrolase</fullName>
            <ecNumber evidence="1">3.6.1.-</ecNumber>
        </recommendedName>
    </domain>
    <domain>
        <recommendedName>
            <fullName evidence="5">GDP polyribonucleotidyltransferase</fullName>
            <ecNumber evidence="1">2.7.7.88</ecNumber>
        </recommendedName>
        <alternativeName>
            <fullName evidence="5">PRNTase</fullName>
        </alternativeName>
    </domain>
    <domain>
        <recommendedName>
            <fullName evidence="5">mRNA cap methyltransferase</fullName>
            <ecNumber evidence="1">2.1.1.375</ecNumber>
        </recommendedName>
        <alternativeName>
            <fullName evidence="1">mRNA (guanine-N(7)-)-methyltransferase</fullName>
            <shortName evidence="1">G-N7-MTase</shortName>
        </alternativeName>
        <alternativeName>
            <fullName evidence="1">mRNA (nucleoside-2'-O-)-methyltransferase</fullName>
            <shortName evidence="1">N1-2'-O-MTase</shortName>
        </alternativeName>
    </domain>
</protein>
<keyword id="KW-0067">ATP-binding</keyword>
<keyword id="KW-1035">Host cytoplasm</keyword>
<keyword id="KW-0378">Hydrolase</keyword>
<keyword id="KW-0489">Methyltransferase</keyword>
<keyword id="KW-0506">mRNA capping</keyword>
<keyword id="KW-0507">mRNA processing</keyword>
<keyword id="KW-0511">Multifunctional enzyme</keyword>
<keyword id="KW-0547">Nucleotide-binding</keyword>
<keyword id="KW-0548">Nucleotidyltransferase</keyword>
<keyword id="KW-1185">Reference proteome</keyword>
<keyword id="KW-0696">RNA-directed RNA polymerase</keyword>
<keyword id="KW-0949">S-adenosyl-L-methionine</keyword>
<keyword id="KW-0808">Transferase</keyword>
<keyword id="KW-0693">Viral RNA replication</keyword>
<keyword id="KW-0946">Virion</keyword>
<evidence type="ECO:0000250" key="1">
    <source>
        <dbReference type="UniProtKB" id="P03523"/>
    </source>
</evidence>
<evidence type="ECO:0000250" key="2">
    <source>
        <dbReference type="UniProtKB" id="P28887"/>
    </source>
</evidence>
<evidence type="ECO:0000255" key="3">
    <source>
        <dbReference type="PROSITE-ProRule" id="PRU00539"/>
    </source>
</evidence>
<evidence type="ECO:0000255" key="4">
    <source>
        <dbReference type="PROSITE-ProRule" id="PRU00923"/>
    </source>
</evidence>
<evidence type="ECO:0000305" key="5"/>
<accession>Q9QJT4</accession>
<dbReference type="EC" id="2.7.7.48" evidence="2"/>
<dbReference type="EC" id="3.6.1.-" evidence="1"/>
<dbReference type="EC" id="2.7.7.88" evidence="1"/>
<dbReference type="EC" id="2.1.1.375" evidence="1"/>
<dbReference type="EMBL" id="AF147498">
    <property type="protein sequence ID" value="AAD56771.1"/>
    <property type="molecule type" value="Genomic_RNA"/>
</dbReference>
<dbReference type="RefSeq" id="NP_050585.1">
    <property type="nucleotide sequence ID" value="NC_000903.1"/>
</dbReference>
<dbReference type="SMR" id="Q9QJT4"/>
<dbReference type="GeneID" id="1457774"/>
<dbReference type="KEGG" id="vg:1457774"/>
<dbReference type="Proteomes" id="UP000007219">
    <property type="component" value="Genome"/>
</dbReference>
<dbReference type="GO" id="GO:0030430">
    <property type="term" value="C:host cell cytoplasm"/>
    <property type="evidence" value="ECO:0007669"/>
    <property type="project" value="UniProtKB-SubCell"/>
</dbReference>
<dbReference type="GO" id="GO:0044423">
    <property type="term" value="C:virion component"/>
    <property type="evidence" value="ECO:0007669"/>
    <property type="project" value="UniProtKB-KW"/>
</dbReference>
<dbReference type="GO" id="GO:0005524">
    <property type="term" value="F:ATP binding"/>
    <property type="evidence" value="ECO:0007669"/>
    <property type="project" value="UniProtKB-KW"/>
</dbReference>
<dbReference type="GO" id="GO:0003924">
    <property type="term" value="F:GTPase activity"/>
    <property type="evidence" value="ECO:0007669"/>
    <property type="project" value="RHEA"/>
</dbReference>
<dbReference type="GO" id="GO:0004482">
    <property type="term" value="F:mRNA 5'-cap (guanine-N7-)-methyltransferase activity"/>
    <property type="evidence" value="ECO:0007669"/>
    <property type="project" value="InterPro"/>
</dbReference>
<dbReference type="GO" id="GO:0003968">
    <property type="term" value="F:RNA-directed RNA polymerase activity"/>
    <property type="evidence" value="ECO:0007669"/>
    <property type="project" value="UniProtKB-KW"/>
</dbReference>
<dbReference type="InterPro" id="IPR026890">
    <property type="entry name" value="Mononeg_mRNAcap"/>
</dbReference>
<dbReference type="InterPro" id="IPR014023">
    <property type="entry name" value="Mononeg_RNA_pol_cat"/>
</dbReference>
<dbReference type="InterPro" id="IPR025786">
    <property type="entry name" value="Mononega_L_MeTrfase"/>
</dbReference>
<dbReference type="Pfam" id="PF14318">
    <property type="entry name" value="Mononeg_mRNAcap"/>
    <property type="match status" value="1"/>
</dbReference>
<dbReference type="Pfam" id="PF00946">
    <property type="entry name" value="Mononeg_RNA_pol"/>
    <property type="match status" value="1"/>
</dbReference>
<dbReference type="PROSITE" id="PS50526">
    <property type="entry name" value="RDRP_SSRNA_NEG_NONSEG"/>
    <property type="match status" value="1"/>
</dbReference>
<dbReference type="PROSITE" id="PS51590">
    <property type="entry name" value="SAM_MT_MNV_L"/>
    <property type="match status" value="1"/>
</dbReference>
<proteinExistence type="inferred from homology"/>
<name>L_SHRV</name>
<sequence length="1983" mass="225025">MEFFDLDLEVSQERLPAECSLNAPLNLSLSLQLFGRIEPKTENIRRQSRRITKVLRERHNGYRLQDLIIDSTRTQANLIPHLVSSASGDLNTPILEHWEMLSKYYQSLGYSLPSLDKFDFKESAGYWNAACSFRDMLLKSQKVEKKVNKQQTYVIYDITFEFVEGVVFIHGGEDGFNDGFLAGGAIAAMTYTELLALFKILNQRAQALLMCNISKGLEPDMVPSPSTIHSIYAEADHMLRMAGQGAIDLLKLWEPLVLTQLGDVLGDRFGLEDDFKLTIRTEAALLADQLNLKRSFARMTELIKSETRKQPLFQLFGLFKHFAYPRVYSRDTINTILGVSDKPSANDPEEYLHDQCEIRKEFYTRYVKAYHRAPQLDLGGLSPGSYLRRALEAGKMPNEKSPLYTNLEWFFVKFKKSIEWPLSDTLSTFLSDKAITQNRSTWLDNETSSRDNSEKRLLLKFIKENEDSVARVVAQAKEIYDNEDDRIIALKVKEMELKLKGRGFGLMTFKPRLLQVLRESIAKKTSKLFPEITMTASDLDLKKRKFLVSRKSDDRRGYVHMSKSLDINKFCTSQRQFNSQAVFQCLDELLGTGALFSRVHEIFEKTWIVDGSASDPPNLKKFKDRYQKLKDLGIDAPHTWGDGVFSGLMGGIEGLCQYVWTICLLLRVERVLSKTSLTHFVMAQGDNVIINLIIPIEIERDGSISPSEHRRVKSLSTSIDTQLAMELEKSGLTLKIEETLSSEHISIYGKDLHCPHHLTLSLKKAGSASIISSEQYQDVPTFLAGLSTSIETISECVNDKVSAHLFGVILAHAGWKSLCVSQTWKGWEYPYQKDETINRVRSQGIKLTEGEQVTVEKRLERNPDKRCLEWILATSFLGSALGMLPFPTPVDLEKRGVGDYITHRLALTKKALSSRVLPRRIEKLIRSMVNLPHSRETDLAKLFDSPFSLNLATEEDATSVIKRLARSTLRDLDIKNERLRAHIDIMDRGLQDLDRELGDSETINPRVAHLIRDITDEKESEMFVTKFATARTMRTVALENPQDVSVVSLLNKKSRAKETYTIWRSKRAPAEDWECSTQRAKIERDSSWGKNVIGVTSPSPVEAMSYRLVDPSTWEEEKKDQDFTINYYLSKPSLISHQARLERGPLVPYYGTQTQPLIAKAYNELKGNPKTNKALMLLSLRETIVKSGSNLDKLIMRLCERALDLDLNTLPSLRAQEEASSGEGIRGGIKESMSPVGPDNFYTNITHKVFNRRWLSGFHINIADFIIWGLTCTRKSITTQGTLSGNLPICIPACRGCLRRKEREFLDIDNPPRWECKEGVKDKAYMYFTTWCDLPRLSTLPSLDPQDAVFMIGRQLACSKGQDSGAATKFYNVSPESLGLLHPRMLLLGYSEGLIFSYLRSQHIVLGCLYHPTITELLPSLEKYTLETIDQHARQLGYLFQEEETAKELLNAGLCPYTPRAIPLTITELKNAVCITVSRSISVTLETKKSIHLMPESGISEEEVVAGRHAARTLGGLLNIKVPNLVYIDCDLTKGLLPWEPELPSEVLQSENFKIDGKRVTLYAKSQKRDNSIWEERGWTCSNSREILAKGVKTKSLFIHQSVPSHLDIDPALIVVIGGGLGGCVVPYLQHWRRPPVIFTTLFSERERISEDGDLIIPPELLVRGLSGRMVERELLEAELCDVTVPGNRKAIVDAVKRRIKPNESVLLIDEIENRGDAEDVLQQSISTLLQSLEKHCSLTSVHTIRESNVKHFTQRLNILRRGRYEANLFWNRYNRRDQYEALIVIPSESRMTECTFSVASVQAAFQKIDDGIEVEAKLEAHSWGLPELPPREKKILLGYVSSVFLKLGLVVIERHMSSTKLIDLLESAGPQMISWEEKQTHRSWASTDSIKEKGVTQDRIMALLCFAWTLKGLKHGVWDTNMDAVVEKTVYITHGPRLCALDEKPRVQYAEFKLQSKKRVEDLKGYLGALLHLETFFPLGDR</sequence>
<organism>
    <name type="scientific">Snakehead rhabdovirus</name>
    <name type="common">SHRV</name>
    <dbReference type="NCBI Taxonomy" id="103603"/>
    <lineage>
        <taxon>Viruses</taxon>
        <taxon>Riboviria</taxon>
        <taxon>Orthornavirae</taxon>
        <taxon>Negarnaviricota</taxon>
        <taxon>Haploviricotina</taxon>
        <taxon>Monjiviricetes</taxon>
        <taxon>Mononegavirales</taxon>
        <taxon>Rhabdoviridae</taxon>
        <taxon>Gammarhabdovirinae</taxon>
        <taxon>Novirhabdovirus</taxon>
        <taxon>Novirhabdovirus snakehead</taxon>
    </lineage>
</organism>
<reference key="1">
    <citation type="journal article" date="2000" name="J. Virol.">
        <title>Production of recombinant snakehead rhabdovirus: the NV protein is not required for viral replication.</title>
        <authorList>
            <person name="Johnson M.C."/>
            <person name="Simon B.E."/>
            <person name="Kim C.H."/>
            <person name="Leong J.A."/>
        </authorList>
    </citation>
    <scope>NUCLEOTIDE SEQUENCE [GENOMIC RNA]</scope>
</reference>
<comment type="function">
    <text evidence="1">RNA-directed RNA polymerase that catalyzes the transcription of viral mRNAs, their capping and polyadenylation. The template is composed of the viral RNA tightly encapsidated by the nucleoprotein (N). The viral polymerase binds to the genomic RNA at the 3' leader promoter, and transcribes subsequently all viral mRNAs with a decreasing efficiency. The first gene is the most transcribed, and the last the least transcribed. The viral phosphoprotein acts as a processivity factor. Capping is concomitant with initiation of mRNA transcription. Indeed, a GDP polyribonucleotidyl transferase (PRNTase) adds the cap structure when the nascent RNA chain length has reached few nucleotides. Ribose 2'-O methylation of viral mRNA cap precedes and facilitates subsequent guanine-N-7 methylation, both activities being carried by the viral polymerase. Polyadenylation of mRNAs occur by a stuttering mechanism at a slipery stop site present at the end viral genes. After finishing transcription of a mRNA, the polymerase can resume transcription of the downstream gene.</text>
</comment>
<comment type="function">
    <text evidence="1">RNA-directed RNA polymerase that catalyzes the replication of viral genomic RNA. The template is composed of the viral RNA tightly encapsidated by the nucleoprotein (N). The replicase mode is dependent on intracellular N protein concentration. In this mode, the polymerase replicates the whole viral genome without recognizing transcriptional signals, and the replicated genome is not caped or polyadenylated.</text>
</comment>
<comment type="catalytic activity">
    <reaction evidence="3">
        <text>RNA(n) + a ribonucleoside 5'-triphosphate = RNA(n+1) + diphosphate</text>
        <dbReference type="Rhea" id="RHEA:21248"/>
        <dbReference type="Rhea" id="RHEA-COMP:14527"/>
        <dbReference type="Rhea" id="RHEA-COMP:17342"/>
        <dbReference type="ChEBI" id="CHEBI:33019"/>
        <dbReference type="ChEBI" id="CHEBI:61557"/>
        <dbReference type="ChEBI" id="CHEBI:140395"/>
        <dbReference type="EC" id="2.7.7.48"/>
    </reaction>
</comment>
<comment type="catalytic activity">
    <reaction evidence="1">
        <text>a 5'-end (5'-triphosphoguanosine)-adenylyl-adenylyl-cytidylyl-adenosine in mRNA + 2 S-adenosyl-L-methionine = a 5'-end (N(7)-methyl 5'-triphosphoguanosine)-(2'-O-methyladenylyl)-adenylyl-cytidylyl-adenosine in mRNA + 2 S-adenosyl-L-homocysteine + H(+)</text>
        <dbReference type="Rhea" id="RHEA:65376"/>
        <dbReference type="Rhea" id="RHEA-COMP:16797"/>
        <dbReference type="Rhea" id="RHEA-COMP:16798"/>
        <dbReference type="ChEBI" id="CHEBI:15378"/>
        <dbReference type="ChEBI" id="CHEBI:57856"/>
        <dbReference type="ChEBI" id="CHEBI:59789"/>
        <dbReference type="ChEBI" id="CHEBI:156483"/>
        <dbReference type="ChEBI" id="CHEBI:156484"/>
        <dbReference type="EC" id="2.1.1.375"/>
    </reaction>
</comment>
<comment type="catalytic activity">
    <reaction evidence="1">
        <text>a 5'-end (5'-triphosphoguanosine)-adenylyl-adenylyl-cytidylyl-adenosine in mRNA + S-adenosyl-L-methionine = a 5'-end (5'-triphosphoguanosine)-(2'-O-methyladenylyl)-adenylyl-cytidylyl-adenosine in mRNA + S-adenosyl-L-homocysteine + H(+)</text>
        <dbReference type="Rhea" id="RHEA:65380"/>
        <dbReference type="Rhea" id="RHEA-COMP:16797"/>
        <dbReference type="Rhea" id="RHEA-COMP:16801"/>
        <dbReference type="ChEBI" id="CHEBI:15378"/>
        <dbReference type="ChEBI" id="CHEBI:57856"/>
        <dbReference type="ChEBI" id="CHEBI:59789"/>
        <dbReference type="ChEBI" id="CHEBI:156482"/>
        <dbReference type="ChEBI" id="CHEBI:156484"/>
    </reaction>
</comment>
<comment type="catalytic activity">
    <reaction evidence="2">
        <text>a 5'-end triphospho-adenylyl-adenylyl-cytidylyl-adenosine in mRNA + GDP + H(+) = a 5'-end (5'-triphosphoguanosine)-adenylyl-adenylyl-cytidylyl-adenosine in mRNA + diphosphate</text>
        <dbReference type="Rhea" id="RHEA:65436"/>
        <dbReference type="Rhea" id="RHEA-COMP:16797"/>
        <dbReference type="Rhea" id="RHEA-COMP:16799"/>
        <dbReference type="ChEBI" id="CHEBI:15378"/>
        <dbReference type="ChEBI" id="CHEBI:33019"/>
        <dbReference type="ChEBI" id="CHEBI:58189"/>
        <dbReference type="ChEBI" id="CHEBI:156484"/>
        <dbReference type="ChEBI" id="CHEBI:156503"/>
        <dbReference type="EC" id="2.7.7.88"/>
    </reaction>
</comment>
<comment type="catalytic activity">
    <reaction evidence="1">
        <text>a 5'-end (5'-triphosphoguanosine)-(2'-O-methyladenylyl)-adenylyl-cytidylyl-adenosine in mRNA + S-adenosyl-L-methionine = a 5'-end (N(7)-methyl 5'-triphosphoguanosine)-(2'-O-methyladenylyl)-adenylyl-cytidylyl-adenosine in mRNA + S-adenosyl-L-homocysteine</text>
        <dbReference type="Rhea" id="RHEA:65440"/>
        <dbReference type="Rhea" id="RHEA-COMP:16798"/>
        <dbReference type="Rhea" id="RHEA-COMP:16801"/>
        <dbReference type="ChEBI" id="CHEBI:57856"/>
        <dbReference type="ChEBI" id="CHEBI:59789"/>
        <dbReference type="ChEBI" id="CHEBI:156482"/>
        <dbReference type="ChEBI" id="CHEBI:156483"/>
    </reaction>
</comment>
<comment type="catalytic activity">
    <reaction evidence="2">
        <text>GTP + H2O = GDP + phosphate + H(+)</text>
        <dbReference type="Rhea" id="RHEA:19669"/>
        <dbReference type="ChEBI" id="CHEBI:15377"/>
        <dbReference type="ChEBI" id="CHEBI:15378"/>
        <dbReference type="ChEBI" id="CHEBI:37565"/>
        <dbReference type="ChEBI" id="CHEBI:43474"/>
        <dbReference type="ChEBI" id="CHEBI:58189"/>
    </reaction>
</comment>
<comment type="subunit">
    <text evidence="1">May form homodimer. Interacts with the P protein.</text>
</comment>
<comment type="subcellular location">
    <subcellularLocation>
        <location evidence="1">Virion</location>
    </subcellularLocation>
    <subcellularLocation>
        <location evidence="1">Host cytoplasm</location>
    </subcellularLocation>
    <text evidence="1">L and P are packaged asymmetrically towards the blunt end of the virus.</text>
</comment>
<comment type="similarity">
    <text evidence="5">Belongs to the rhabdoviridae protein L family.</text>
</comment>
<organismHost>
    <name type="scientific">Gobiosoma bosc</name>
    <name type="common">Naked goby</name>
    <name type="synonym">Gobius bosc</name>
    <dbReference type="NCBI Taxonomy" id="203314"/>
</organismHost>